<proteinExistence type="inferred from homology"/>
<name>AMPA_CUTAK</name>
<reference key="1">
    <citation type="journal article" date="2004" name="Science">
        <title>The complete genome sequence of Propionibacterium acnes, a commensal of human skin.</title>
        <authorList>
            <person name="Brueggemann H."/>
            <person name="Henne A."/>
            <person name="Hoster F."/>
            <person name="Liesegang H."/>
            <person name="Wiezer A."/>
            <person name="Strittmatter A."/>
            <person name="Hujer S."/>
            <person name="Duerre P."/>
            <person name="Gottschalk G."/>
        </authorList>
    </citation>
    <scope>NUCLEOTIDE SEQUENCE [LARGE SCALE GENOMIC DNA]</scope>
    <source>
        <strain>DSM 16379 / KPA171202</strain>
    </source>
</reference>
<dbReference type="EC" id="3.4.11.1" evidence="1"/>
<dbReference type="EC" id="3.4.11.10" evidence="1"/>
<dbReference type="EMBL" id="AE017283">
    <property type="protein sequence ID" value="AAT82451.1"/>
    <property type="status" value="ALT_INIT"/>
    <property type="molecule type" value="Genomic_DNA"/>
</dbReference>
<dbReference type="RefSeq" id="WP_002519154.1">
    <property type="nucleotide sequence ID" value="NZ_CP025935.1"/>
</dbReference>
<dbReference type="SMR" id="Q6A9W5"/>
<dbReference type="EnsemblBacteria" id="AAT82451">
    <property type="protein sequence ID" value="AAT82451"/>
    <property type="gene ID" value="PPA0694"/>
</dbReference>
<dbReference type="KEGG" id="pac:PPA0694"/>
<dbReference type="eggNOG" id="COG0260">
    <property type="taxonomic scope" value="Bacteria"/>
</dbReference>
<dbReference type="HOGENOM" id="CLU_013734_2_0_11"/>
<dbReference type="Proteomes" id="UP000000603">
    <property type="component" value="Chromosome"/>
</dbReference>
<dbReference type="GO" id="GO:0005737">
    <property type="term" value="C:cytoplasm"/>
    <property type="evidence" value="ECO:0007669"/>
    <property type="project" value="UniProtKB-SubCell"/>
</dbReference>
<dbReference type="GO" id="GO:0030145">
    <property type="term" value="F:manganese ion binding"/>
    <property type="evidence" value="ECO:0007669"/>
    <property type="project" value="UniProtKB-UniRule"/>
</dbReference>
<dbReference type="GO" id="GO:0070006">
    <property type="term" value="F:metalloaminopeptidase activity"/>
    <property type="evidence" value="ECO:0007669"/>
    <property type="project" value="InterPro"/>
</dbReference>
<dbReference type="GO" id="GO:0006508">
    <property type="term" value="P:proteolysis"/>
    <property type="evidence" value="ECO:0007669"/>
    <property type="project" value="UniProtKB-KW"/>
</dbReference>
<dbReference type="CDD" id="cd00433">
    <property type="entry name" value="Peptidase_M17"/>
    <property type="match status" value="1"/>
</dbReference>
<dbReference type="Gene3D" id="3.40.220.10">
    <property type="entry name" value="Leucine Aminopeptidase, subunit E, domain 1"/>
    <property type="match status" value="1"/>
</dbReference>
<dbReference type="Gene3D" id="3.40.630.10">
    <property type="entry name" value="Zn peptidases"/>
    <property type="match status" value="1"/>
</dbReference>
<dbReference type="HAMAP" id="MF_00181">
    <property type="entry name" value="Cytosol_peptidase_M17"/>
    <property type="match status" value="1"/>
</dbReference>
<dbReference type="InterPro" id="IPR011356">
    <property type="entry name" value="Leucine_aapep/pepB"/>
</dbReference>
<dbReference type="InterPro" id="IPR043472">
    <property type="entry name" value="Macro_dom-like"/>
</dbReference>
<dbReference type="InterPro" id="IPR000819">
    <property type="entry name" value="Peptidase_M17_C"/>
</dbReference>
<dbReference type="InterPro" id="IPR023042">
    <property type="entry name" value="Peptidase_M17_leu_NH2_pept"/>
</dbReference>
<dbReference type="InterPro" id="IPR008283">
    <property type="entry name" value="Peptidase_M17_N"/>
</dbReference>
<dbReference type="NCBIfam" id="NF002073">
    <property type="entry name" value="PRK00913.1-2"/>
    <property type="match status" value="1"/>
</dbReference>
<dbReference type="PANTHER" id="PTHR11963:SF23">
    <property type="entry name" value="CYTOSOL AMINOPEPTIDASE"/>
    <property type="match status" value="1"/>
</dbReference>
<dbReference type="PANTHER" id="PTHR11963">
    <property type="entry name" value="LEUCINE AMINOPEPTIDASE-RELATED"/>
    <property type="match status" value="1"/>
</dbReference>
<dbReference type="Pfam" id="PF00883">
    <property type="entry name" value="Peptidase_M17"/>
    <property type="match status" value="1"/>
</dbReference>
<dbReference type="Pfam" id="PF02789">
    <property type="entry name" value="Peptidase_M17_N"/>
    <property type="match status" value="1"/>
</dbReference>
<dbReference type="PRINTS" id="PR00481">
    <property type="entry name" value="LAMNOPPTDASE"/>
</dbReference>
<dbReference type="SUPFAM" id="SSF52949">
    <property type="entry name" value="Macro domain-like"/>
    <property type="match status" value="1"/>
</dbReference>
<dbReference type="SUPFAM" id="SSF53187">
    <property type="entry name" value="Zn-dependent exopeptidases"/>
    <property type="match status" value="1"/>
</dbReference>
<dbReference type="PROSITE" id="PS00631">
    <property type="entry name" value="CYTOSOL_AP"/>
    <property type="match status" value="1"/>
</dbReference>
<evidence type="ECO:0000255" key="1">
    <source>
        <dbReference type="HAMAP-Rule" id="MF_00181"/>
    </source>
</evidence>
<evidence type="ECO:0000305" key="2"/>
<gene>
    <name evidence="1" type="primary">pepA</name>
    <name type="ordered locus">PPA0694</name>
</gene>
<accession>Q6A9W5</accession>
<sequence length="508" mass="52085">MRGILVANSTQLPIRPRPDLKVSRNANGADVVIAGLVEGSQGPTVQGLAPRAVKEAEETFGAPLVEVAIRAGGSTKIGSTVVLPWFGNSLVLVGCGAEGFDGESLRKAAGSGARAAADLSHGSSLKVAVDMGTVSAEQVRIAAEGALLGCYKVPTITATSNEPEISTVTIVSNARGAKPELNKARILADAVYTARDWVDAPANLLYPKTFAASVQSWCNNLSDVTVDVLDEKALGRGGFGGILAVGGGSAHSPRLVRVEYAPEGSTTTLALVGKGITFDSGGLNIKTAANMYTMKCDMGGAAAVLAAIGAIARLGLNVRVVAYGCLAENMPSGSGWRPSDVVTMYDGTTVENGNSDAEGRIVMADGLARACEDNPDFIVDISTLTGACMVALGNHTAGVMTSGAQAADTLLDASEAAGEDFWELPITDEVREGLHSDIADVKSSGAREGGAMLAAAFLQRFVTPGIDWAHLDIAGPAYNEASAHDYTPIQGTGFGVRTLVQLAAHMAG</sequence>
<comment type="function">
    <text evidence="1">Presumably involved in the processing and regular turnover of intracellular proteins. Catalyzes the removal of unsubstituted N-terminal amino acids from various peptides.</text>
</comment>
<comment type="catalytic activity">
    <reaction evidence="1">
        <text>Release of an N-terminal amino acid, Xaa-|-Yaa-, in which Xaa is preferably Leu, but may be other amino acids including Pro although not Arg or Lys, and Yaa may be Pro. Amino acid amides and methyl esters are also readily hydrolyzed, but rates on arylamides are exceedingly low.</text>
        <dbReference type="EC" id="3.4.11.1"/>
    </reaction>
</comment>
<comment type="catalytic activity">
    <reaction evidence="1">
        <text>Release of an N-terminal amino acid, preferentially leucine, but not glutamic or aspartic acids.</text>
        <dbReference type="EC" id="3.4.11.10"/>
    </reaction>
</comment>
<comment type="cofactor">
    <cofactor evidence="1">
        <name>Mn(2+)</name>
        <dbReference type="ChEBI" id="CHEBI:29035"/>
    </cofactor>
    <text evidence="1">Binds 2 manganese ions per subunit.</text>
</comment>
<comment type="subcellular location">
    <subcellularLocation>
        <location evidence="1">Cytoplasm</location>
    </subcellularLocation>
</comment>
<comment type="similarity">
    <text evidence="1">Belongs to the peptidase M17 family.</text>
</comment>
<comment type="sequence caution" evidence="2">
    <conflict type="erroneous initiation">
        <sequence resource="EMBL-CDS" id="AAT82451"/>
    </conflict>
</comment>
<feature type="chain" id="PRO_0000165778" description="Probable cytosol aminopeptidase">
    <location>
        <begin position="1"/>
        <end position="508"/>
    </location>
</feature>
<feature type="active site" evidence="1">
    <location>
        <position position="286"/>
    </location>
</feature>
<feature type="active site" evidence="1">
    <location>
        <position position="360"/>
    </location>
</feature>
<feature type="binding site" evidence="1">
    <location>
        <position position="274"/>
    </location>
    <ligand>
        <name>Mn(2+)</name>
        <dbReference type="ChEBI" id="CHEBI:29035"/>
        <label>2</label>
    </ligand>
</feature>
<feature type="binding site" evidence="1">
    <location>
        <position position="279"/>
    </location>
    <ligand>
        <name>Mn(2+)</name>
        <dbReference type="ChEBI" id="CHEBI:29035"/>
        <label>1</label>
    </ligand>
</feature>
<feature type="binding site" evidence="1">
    <location>
        <position position="279"/>
    </location>
    <ligand>
        <name>Mn(2+)</name>
        <dbReference type="ChEBI" id="CHEBI:29035"/>
        <label>2</label>
    </ligand>
</feature>
<feature type="binding site" evidence="1">
    <location>
        <position position="297"/>
    </location>
    <ligand>
        <name>Mn(2+)</name>
        <dbReference type="ChEBI" id="CHEBI:29035"/>
        <label>2</label>
    </ligand>
</feature>
<feature type="binding site" evidence="1">
    <location>
        <position position="356"/>
    </location>
    <ligand>
        <name>Mn(2+)</name>
        <dbReference type="ChEBI" id="CHEBI:29035"/>
        <label>1</label>
    </ligand>
</feature>
<feature type="binding site" evidence="1">
    <location>
        <position position="358"/>
    </location>
    <ligand>
        <name>Mn(2+)</name>
        <dbReference type="ChEBI" id="CHEBI:29035"/>
        <label>1</label>
    </ligand>
</feature>
<feature type="binding site" evidence="1">
    <location>
        <position position="358"/>
    </location>
    <ligand>
        <name>Mn(2+)</name>
        <dbReference type="ChEBI" id="CHEBI:29035"/>
        <label>2</label>
    </ligand>
</feature>
<keyword id="KW-0031">Aminopeptidase</keyword>
<keyword id="KW-0963">Cytoplasm</keyword>
<keyword id="KW-0378">Hydrolase</keyword>
<keyword id="KW-0464">Manganese</keyword>
<keyword id="KW-0479">Metal-binding</keyword>
<keyword id="KW-0645">Protease</keyword>
<protein>
    <recommendedName>
        <fullName evidence="1">Probable cytosol aminopeptidase</fullName>
        <ecNumber evidence="1">3.4.11.1</ecNumber>
    </recommendedName>
    <alternativeName>
        <fullName evidence="1">Leucine aminopeptidase</fullName>
        <shortName evidence="1">LAP</shortName>
        <ecNumber evidence="1">3.4.11.10</ecNumber>
    </alternativeName>
    <alternativeName>
        <fullName evidence="1">Leucyl aminopeptidase</fullName>
    </alternativeName>
</protein>
<organism>
    <name type="scientific">Cutibacterium acnes (strain DSM 16379 / KPA171202)</name>
    <name type="common">Propionibacterium acnes</name>
    <dbReference type="NCBI Taxonomy" id="267747"/>
    <lineage>
        <taxon>Bacteria</taxon>
        <taxon>Bacillati</taxon>
        <taxon>Actinomycetota</taxon>
        <taxon>Actinomycetes</taxon>
        <taxon>Propionibacteriales</taxon>
        <taxon>Propionibacteriaceae</taxon>
        <taxon>Cutibacterium</taxon>
    </lineage>
</organism>